<gene>
    <name evidence="1" type="primary">rpl23</name>
    <name type="ordered locus">Mbar_A0108</name>
</gene>
<organism>
    <name type="scientific">Methanosarcina barkeri (strain Fusaro / DSM 804)</name>
    <dbReference type="NCBI Taxonomy" id="269797"/>
    <lineage>
        <taxon>Archaea</taxon>
        <taxon>Methanobacteriati</taxon>
        <taxon>Methanobacteriota</taxon>
        <taxon>Stenosarchaea group</taxon>
        <taxon>Methanomicrobia</taxon>
        <taxon>Methanosarcinales</taxon>
        <taxon>Methanosarcinaceae</taxon>
        <taxon>Methanosarcina</taxon>
    </lineage>
</organism>
<accession>Q46G97</accession>
<dbReference type="EMBL" id="CP000099">
    <property type="protein sequence ID" value="AAZ69095.1"/>
    <property type="molecule type" value="Genomic_DNA"/>
</dbReference>
<dbReference type="SMR" id="Q46G97"/>
<dbReference type="STRING" id="269797.Mbar_A0108"/>
<dbReference type="PaxDb" id="269797-Mbar_A0108"/>
<dbReference type="KEGG" id="mba:Mbar_A0108"/>
<dbReference type="eggNOG" id="arCOG04072">
    <property type="taxonomic scope" value="Archaea"/>
</dbReference>
<dbReference type="HOGENOM" id="CLU_037562_4_2_2"/>
<dbReference type="OrthoDB" id="7751at2157"/>
<dbReference type="GO" id="GO:1990904">
    <property type="term" value="C:ribonucleoprotein complex"/>
    <property type="evidence" value="ECO:0007669"/>
    <property type="project" value="UniProtKB-KW"/>
</dbReference>
<dbReference type="GO" id="GO:0005840">
    <property type="term" value="C:ribosome"/>
    <property type="evidence" value="ECO:0007669"/>
    <property type="project" value="UniProtKB-KW"/>
</dbReference>
<dbReference type="GO" id="GO:0019843">
    <property type="term" value="F:rRNA binding"/>
    <property type="evidence" value="ECO:0007669"/>
    <property type="project" value="UniProtKB-UniRule"/>
</dbReference>
<dbReference type="GO" id="GO:0003735">
    <property type="term" value="F:structural constituent of ribosome"/>
    <property type="evidence" value="ECO:0007669"/>
    <property type="project" value="InterPro"/>
</dbReference>
<dbReference type="GO" id="GO:0006412">
    <property type="term" value="P:translation"/>
    <property type="evidence" value="ECO:0007669"/>
    <property type="project" value="UniProtKB-UniRule"/>
</dbReference>
<dbReference type="FunFam" id="3.30.70.330:FF:000532">
    <property type="entry name" value="50S ribosomal protein L23"/>
    <property type="match status" value="1"/>
</dbReference>
<dbReference type="Gene3D" id="3.30.70.330">
    <property type="match status" value="1"/>
</dbReference>
<dbReference type="HAMAP" id="MF_01369_A">
    <property type="entry name" value="Ribosomal_uL23_A"/>
    <property type="match status" value="1"/>
</dbReference>
<dbReference type="InterPro" id="IPR012677">
    <property type="entry name" value="Nucleotide-bd_a/b_plait_sf"/>
</dbReference>
<dbReference type="InterPro" id="IPR019985">
    <property type="entry name" value="Ribosomal_uL23"/>
</dbReference>
<dbReference type="InterPro" id="IPR013025">
    <property type="entry name" value="Ribosomal_uL23-like"/>
</dbReference>
<dbReference type="InterPro" id="IPR012678">
    <property type="entry name" value="Ribosomal_uL23/eL15/eS24_sf"/>
</dbReference>
<dbReference type="NCBIfam" id="NF011118">
    <property type="entry name" value="PRK14548.1"/>
    <property type="match status" value="1"/>
</dbReference>
<dbReference type="NCBIfam" id="TIGR03636">
    <property type="entry name" value="uL23_arch"/>
    <property type="match status" value="1"/>
</dbReference>
<dbReference type="PANTHER" id="PTHR11620">
    <property type="entry name" value="60S RIBOSOMAL PROTEIN L23A"/>
    <property type="match status" value="1"/>
</dbReference>
<dbReference type="Pfam" id="PF00276">
    <property type="entry name" value="Ribosomal_L23"/>
    <property type="match status" value="1"/>
</dbReference>
<dbReference type="SUPFAM" id="SSF54189">
    <property type="entry name" value="Ribosomal proteins S24e, L23 and L15e"/>
    <property type="match status" value="1"/>
</dbReference>
<proteinExistence type="inferred from homology"/>
<evidence type="ECO:0000255" key="1">
    <source>
        <dbReference type="HAMAP-Rule" id="MF_01369"/>
    </source>
</evidence>
<evidence type="ECO:0000305" key="2"/>
<feature type="chain" id="PRO_0000272945" description="Large ribosomal subunit protein uL23">
    <location>
        <begin position="1"/>
        <end position="82"/>
    </location>
</feature>
<reference key="1">
    <citation type="journal article" date="2006" name="J. Bacteriol.">
        <title>The Methanosarcina barkeri genome: comparative analysis with Methanosarcina acetivorans and Methanosarcina mazei reveals extensive rearrangement within methanosarcinal genomes.</title>
        <authorList>
            <person name="Maeder D.L."/>
            <person name="Anderson I."/>
            <person name="Brettin T.S."/>
            <person name="Bruce D.C."/>
            <person name="Gilna P."/>
            <person name="Han C.S."/>
            <person name="Lapidus A."/>
            <person name="Metcalf W.W."/>
            <person name="Saunders E."/>
            <person name="Tapia R."/>
            <person name="Sowers K.R."/>
        </authorList>
    </citation>
    <scope>NUCLEOTIDE SEQUENCE [LARGE SCALE GENOMIC DNA]</scope>
    <source>
        <strain>Fusaro / DSM 804</strain>
    </source>
</reference>
<protein>
    <recommendedName>
        <fullName evidence="1">Large ribosomal subunit protein uL23</fullName>
    </recommendedName>
    <alternativeName>
        <fullName evidence="2">50S ribosomal protein L23</fullName>
    </alternativeName>
</protein>
<sequence length="82" mass="9417">MSSINYPFVTEKAMMLLDENKLQFIVDTRSNKKQIVEDVEKLYGFKVKSVRTMTTMKGTKKAILTFEDPESAHEIATRIGLM</sequence>
<name>RL23_METBF</name>
<keyword id="KW-0687">Ribonucleoprotein</keyword>
<keyword id="KW-0689">Ribosomal protein</keyword>
<keyword id="KW-0694">RNA-binding</keyword>
<keyword id="KW-0699">rRNA-binding</keyword>
<comment type="function">
    <text evidence="1">Binds to 23S rRNA. One of the proteins that surrounds the polypeptide exit tunnel on the outside of the ribosome.</text>
</comment>
<comment type="subunit">
    <text evidence="1">Part of the 50S ribosomal subunit. Contacts protein L29.</text>
</comment>
<comment type="similarity">
    <text evidence="1">Belongs to the universal ribosomal protein uL23 family.</text>
</comment>